<evidence type="ECO:0000250" key="1"/>
<evidence type="ECO:0000255" key="2"/>
<evidence type="ECO:0000255" key="3">
    <source>
        <dbReference type="PROSITE-ProRule" id="PRU00219"/>
    </source>
</evidence>
<evidence type="ECO:0000255" key="4">
    <source>
        <dbReference type="PROSITE-ProRule" id="PRU00801"/>
    </source>
</evidence>
<evidence type="ECO:0000256" key="5">
    <source>
        <dbReference type="SAM" id="MobiDB-lite"/>
    </source>
</evidence>
<evidence type="ECO:0000305" key="6"/>
<proteinExistence type="evidence at transcript level"/>
<comment type="function">
    <text evidence="1">May act as a tumor suppressor.</text>
</comment>
<comment type="subcellular location">
    <subcellularLocation>
        <location evidence="1">Secreted</location>
    </subcellularLocation>
</comment>
<comment type="similarity">
    <text evidence="6">Belongs to the ITIH family.</text>
</comment>
<name>ITIH5_BOVIN</name>
<reference key="1">
    <citation type="submission" date="2007-02" db="EMBL/GenBank/DDBJ databases">
        <authorList>
            <consortium name="NIH - Mammalian Gene Collection (MGC) project"/>
        </authorList>
    </citation>
    <scope>NUCLEOTIDE SEQUENCE [LARGE SCALE MRNA]</scope>
    <source>
        <strain>Hereford</strain>
        <tissue>Fetal muscle</tissue>
    </source>
</reference>
<accession>A2VE29</accession>
<gene>
    <name type="primary">ITIH5</name>
</gene>
<feature type="signal peptide" evidence="2">
    <location>
        <begin position="1"/>
        <end position="16"/>
    </location>
</feature>
<feature type="chain" id="PRO_0000331407" description="Inter-alpha-trypsin inhibitor heavy chain H5">
    <location>
        <begin position="17"/>
        <end position="940"/>
    </location>
</feature>
<feature type="domain" description="VIT" evidence="4">
    <location>
        <begin position="35"/>
        <end position="161"/>
    </location>
</feature>
<feature type="domain" description="VWFA" evidence="3">
    <location>
        <begin position="295"/>
        <end position="478"/>
    </location>
</feature>
<feature type="region of interest" description="Disordered" evidence="5">
    <location>
        <begin position="207"/>
        <end position="227"/>
    </location>
</feature>
<feature type="glycosylation site" description="N-linked (GlcNAc...) asparagine" evidence="2">
    <location>
        <position position="97"/>
    </location>
</feature>
<feature type="glycosylation site" description="N-linked (GlcNAc...) asparagine" evidence="2">
    <location>
        <position position="127"/>
    </location>
</feature>
<feature type="glycosylation site" description="N-linked (GlcNAc...) asparagine" evidence="2">
    <location>
        <position position="231"/>
    </location>
</feature>
<feature type="glycosylation site" description="N-linked (GlcNAc...) asparagine" evidence="2">
    <location>
        <position position="421"/>
    </location>
</feature>
<feature type="glycosylation site" description="N-linked (GlcNAc...) asparagine" evidence="2">
    <location>
        <position position="508"/>
    </location>
</feature>
<feature type="glycosylation site" description="N-linked (GlcNAc...) asparagine" evidence="2">
    <location>
        <position position="694"/>
    </location>
</feature>
<feature type="glycosylation site" description="N-linked (GlcNAc...) asparagine" evidence="2">
    <location>
        <position position="778"/>
    </location>
</feature>
<feature type="glycosylation site" description="N-linked (GlcNAc...) asparagine" evidence="2">
    <location>
        <position position="795"/>
    </location>
</feature>
<organism>
    <name type="scientific">Bos taurus</name>
    <name type="common">Bovine</name>
    <dbReference type="NCBI Taxonomy" id="9913"/>
    <lineage>
        <taxon>Eukaryota</taxon>
        <taxon>Metazoa</taxon>
        <taxon>Chordata</taxon>
        <taxon>Craniata</taxon>
        <taxon>Vertebrata</taxon>
        <taxon>Euteleostomi</taxon>
        <taxon>Mammalia</taxon>
        <taxon>Eutheria</taxon>
        <taxon>Laurasiatheria</taxon>
        <taxon>Artiodactyla</taxon>
        <taxon>Ruminantia</taxon>
        <taxon>Pecora</taxon>
        <taxon>Bovidae</taxon>
        <taxon>Bovinae</taxon>
        <taxon>Bos</taxon>
    </lineage>
</organism>
<dbReference type="EMBL" id="BC133544">
    <property type="protein sequence ID" value="AAI33545.1"/>
    <property type="molecule type" value="mRNA"/>
</dbReference>
<dbReference type="RefSeq" id="NP_001095986.1">
    <property type="nucleotide sequence ID" value="NM_001102516.1"/>
</dbReference>
<dbReference type="SMR" id="A2VE29"/>
<dbReference type="FunCoup" id="A2VE29">
    <property type="interactions" value="93"/>
</dbReference>
<dbReference type="STRING" id="9913.ENSBTAP00000045691"/>
<dbReference type="GlyCosmos" id="A2VE29">
    <property type="glycosylation" value="8 sites, No reported glycans"/>
</dbReference>
<dbReference type="GlyGen" id="A2VE29">
    <property type="glycosylation" value="8 sites"/>
</dbReference>
<dbReference type="PaxDb" id="9913-ENSBTAP00000045691"/>
<dbReference type="GeneID" id="534787"/>
<dbReference type="KEGG" id="bta:534787"/>
<dbReference type="CTD" id="80760"/>
<dbReference type="eggNOG" id="ENOG502QPS2">
    <property type="taxonomic scope" value="Eukaryota"/>
</dbReference>
<dbReference type="InParanoid" id="A2VE29"/>
<dbReference type="OrthoDB" id="299997at2759"/>
<dbReference type="Proteomes" id="UP000009136">
    <property type="component" value="Unplaced"/>
</dbReference>
<dbReference type="GO" id="GO:0005576">
    <property type="term" value="C:extracellular region"/>
    <property type="evidence" value="ECO:0007669"/>
    <property type="project" value="UniProtKB-SubCell"/>
</dbReference>
<dbReference type="GO" id="GO:0004867">
    <property type="term" value="F:serine-type endopeptidase inhibitor activity"/>
    <property type="evidence" value="ECO:0007669"/>
    <property type="project" value="UniProtKB-KW"/>
</dbReference>
<dbReference type="GO" id="GO:0030212">
    <property type="term" value="P:hyaluronan metabolic process"/>
    <property type="evidence" value="ECO:0007669"/>
    <property type="project" value="InterPro"/>
</dbReference>
<dbReference type="CDD" id="cd01461">
    <property type="entry name" value="vWA_interalpha_trypsin_inhibitor"/>
    <property type="match status" value="1"/>
</dbReference>
<dbReference type="FunFam" id="3.40.50.410:FF:000013">
    <property type="entry name" value="inter-alpha-trypsin inhibitor heavy chain H2"/>
    <property type="match status" value="1"/>
</dbReference>
<dbReference type="Gene3D" id="3.40.50.410">
    <property type="entry name" value="von Willebrand factor, type A domain"/>
    <property type="match status" value="1"/>
</dbReference>
<dbReference type="InterPro" id="IPR010600">
    <property type="entry name" value="ITI_HC_C"/>
</dbReference>
<dbReference type="InterPro" id="IPR050934">
    <property type="entry name" value="ITIH"/>
</dbReference>
<dbReference type="InterPro" id="IPR013694">
    <property type="entry name" value="VIT"/>
</dbReference>
<dbReference type="InterPro" id="IPR002035">
    <property type="entry name" value="VWF_A"/>
</dbReference>
<dbReference type="InterPro" id="IPR036465">
    <property type="entry name" value="vWFA_dom_sf"/>
</dbReference>
<dbReference type="PANTHER" id="PTHR10338">
    <property type="entry name" value="INTER-ALPHA-TRYPSIN INHIBITOR HEAVY CHAIN FAMILY MEMBER"/>
    <property type="match status" value="1"/>
</dbReference>
<dbReference type="PANTHER" id="PTHR10338:SF62">
    <property type="entry name" value="INTER-ALPHA-TRYPSIN INHIBITOR HEAVY CHAIN H5"/>
    <property type="match status" value="1"/>
</dbReference>
<dbReference type="Pfam" id="PF06668">
    <property type="entry name" value="ITI_HC_C"/>
    <property type="match status" value="1"/>
</dbReference>
<dbReference type="Pfam" id="PF08487">
    <property type="entry name" value="VIT"/>
    <property type="match status" value="1"/>
</dbReference>
<dbReference type="Pfam" id="PF00092">
    <property type="entry name" value="VWA"/>
    <property type="match status" value="1"/>
</dbReference>
<dbReference type="SMART" id="SM00609">
    <property type="entry name" value="VIT"/>
    <property type="match status" value="1"/>
</dbReference>
<dbReference type="SMART" id="SM00327">
    <property type="entry name" value="VWA"/>
    <property type="match status" value="1"/>
</dbReference>
<dbReference type="SUPFAM" id="SSF53300">
    <property type="entry name" value="vWA-like"/>
    <property type="match status" value="1"/>
</dbReference>
<dbReference type="PROSITE" id="PS51468">
    <property type="entry name" value="VIT"/>
    <property type="match status" value="1"/>
</dbReference>
<dbReference type="PROSITE" id="PS50234">
    <property type="entry name" value="VWFA"/>
    <property type="match status" value="1"/>
</dbReference>
<keyword id="KW-0325">Glycoprotein</keyword>
<keyword id="KW-0646">Protease inhibitor</keyword>
<keyword id="KW-1185">Reference proteome</keyword>
<keyword id="KW-0964">Secreted</keyword>
<keyword id="KW-0722">Serine protease inhibitor</keyword>
<keyword id="KW-0732">Signal</keyword>
<sequence length="940" mass="104356">MLPLLGLCFALPLCAGLLEEARSWEDTSDQVGLRIPRQVRLLQRLKTKPLMTEFSVKSTIISRYAFTTVACRMLNRGSEDQEVTFQMQIPAAAFITNFTALIGDKVYQGEITEREKRNGDKVKEKRNKTIEDNGEKGTETFRASAVLPSKDKAAFLLSYEELLQRRLGKYEHVVSVRPQQLVGRLTVEVTVLERPGIAELEVLGLQNSRQRGSGRGPDDSGPPPSTVINQNETFAKVVFKPSVVQQAKIAQNGILGDFIVRYDVNREQSIGDIQVLDGYFVHYFAPKDLPPLPKNVVFVLDSSASMVGTKLRQTKDALFTILHDLRPQDHFNIVGFSNRIKVWKDHLVSVTPNSIRDGKVYIHHMSPSGGTDINGALQRGIQLLNDYVAHNDIEDRSVSLVVFLTDGKPTVGETHTFKILNNTREATRGRVCIFTVGIGADVDFKLLEKLSLENCGLTRRVHEDHDARAQLIGFYDEIRTPLLSDIRVDYPPSLVERATRTLFPNYFNGSEIVIAGKLVDRAMDRLHVEVTASNSKKFVVLKKDVPVEPRKVGIDVSQSPRPRGRGQEEPNHLERLWSYLTLKELLSAWLQSIEEPERERLRQEAQALAVNHHFLIPFTSMTLKSAPRTEAPEAAYGMSSTSMATGPETVMQSLRGTHLQPGPAVKKPYNPRIKISKTSADGDPHFVVDFPLSNLTVCFNIDGEPGHILRLVSDHADSGVTVNGELIGAPAPPNGHKKQRTYFRTITILVNKPERSYLEITPSRVIVDGGDRLVLPCNQSAVVGRRGLEVSVSANASVTISIQGTVAFVVLLHLYKKPAPYQRNHLGFYIANGQGLSSNCHGLLGQFLNQEARLIGLSKSPAHPPVPEAGERSEAVLEVKGRQVPVVWKQRRIYNGEEQVDCWFARNNAAGLIDGEYKGYLAAHPFDSETAFGPGLSQGL</sequence>
<protein>
    <recommendedName>
        <fullName>Inter-alpha-trypsin inhibitor heavy chain H5</fullName>
        <shortName>ITI heavy chain H5</shortName>
        <shortName>ITI-HC5</shortName>
        <shortName>Inter-alpha-inhibitor heavy chain 5</shortName>
    </recommendedName>
</protein>